<evidence type="ECO:0000255" key="1">
    <source>
        <dbReference type="HAMAP-Rule" id="MF_00207"/>
    </source>
</evidence>
<keyword id="KW-0963">Cytoplasm</keyword>
<keyword id="KW-0378">Hydrolase</keyword>
<keyword id="KW-0464">Manganese</keyword>
<keyword id="KW-0479">Metal-binding</keyword>
<protein>
    <recommendedName>
        <fullName evidence="1">Probable manganese-dependent inorganic pyrophosphatase</fullName>
        <ecNumber evidence="1">3.6.1.1</ecNumber>
    </recommendedName>
    <alternativeName>
        <fullName evidence="1">Pyrophosphate phospho-hydrolase</fullName>
        <shortName evidence="1">PPase</shortName>
    </alternativeName>
</protein>
<dbReference type="EC" id="3.6.1.1" evidence="1"/>
<dbReference type="EMBL" id="CP000936">
    <property type="protein sequence ID" value="ACA35782.1"/>
    <property type="molecule type" value="Genomic_DNA"/>
</dbReference>
<dbReference type="RefSeq" id="WP_000036043.1">
    <property type="nucleotide sequence ID" value="NC_010380.1"/>
</dbReference>
<dbReference type="SMR" id="B1ICV4"/>
<dbReference type="KEGG" id="spv:SPH_1648"/>
<dbReference type="HOGENOM" id="CLU_025243_0_1_9"/>
<dbReference type="Proteomes" id="UP000002163">
    <property type="component" value="Chromosome"/>
</dbReference>
<dbReference type="GO" id="GO:0005737">
    <property type="term" value="C:cytoplasm"/>
    <property type="evidence" value="ECO:0007669"/>
    <property type="project" value="UniProtKB-SubCell"/>
</dbReference>
<dbReference type="GO" id="GO:0004427">
    <property type="term" value="F:inorganic diphosphate phosphatase activity"/>
    <property type="evidence" value="ECO:0007669"/>
    <property type="project" value="UniProtKB-UniRule"/>
</dbReference>
<dbReference type="GO" id="GO:0030145">
    <property type="term" value="F:manganese ion binding"/>
    <property type="evidence" value="ECO:0007669"/>
    <property type="project" value="UniProtKB-UniRule"/>
</dbReference>
<dbReference type="FunFam" id="3.10.310.20:FF:000001">
    <property type="entry name" value="Probable manganese-dependent inorganic pyrophosphatase"/>
    <property type="match status" value="1"/>
</dbReference>
<dbReference type="FunFam" id="3.90.1640.10:FF:000001">
    <property type="entry name" value="Probable manganese-dependent inorganic pyrophosphatase"/>
    <property type="match status" value="1"/>
</dbReference>
<dbReference type="Gene3D" id="3.10.310.20">
    <property type="entry name" value="DHHA2 domain"/>
    <property type="match status" value="1"/>
</dbReference>
<dbReference type="Gene3D" id="3.90.1640.10">
    <property type="entry name" value="inorganic pyrophosphatase (n-terminal core)"/>
    <property type="match status" value="1"/>
</dbReference>
<dbReference type="HAMAP" id="MF_00207">
    <property type="entry name" value="PPase_C"/>
    <property type="match status" value="1"/>
</dbReference>
<dbReference type="InterPro" id="IPR001667">
    <property type="entry name" value="DDH_dom"/>
</dbReference>
<dbReference type="InterPro" id="IPR038763">
    <property type="entry name" value="DHH_sf"/>
</dbReference>
<dbReference type="InterPro" id="IPR004097">
    <property type="entry name" value="DHHA2"/>
</dbReference>
<dbReference type="InterPro" id="IPR038222">
    <property type="entry name" value="DHHA2_dom_sf"/>
</dbReference>
<dbReference type="InterPro" id="IPR022934">
    <property type="entry name" value="Mn-dep_inorganic_PyrPase"/>
</dbReference>
<dbReference type="InterPro" id="IPR051319">
    <property type="entry name" value="Oligoribo/pAp-PDE_c-di-AMP_PDE"/>
</dbReference>
<dbReference type="NCBIfam" id="NF003877">
    <property type="entry name" value="PRK05427.1"/>
    <property type="match status" value="1"/>
</dbReference>
<dbReference type="PANTHER" id="PTHR47618">
    <property type="entry name" value="BIFUNCTIONAL OLIGORIBONUCLEASE AND PAP PHOSPHATASE NRNA"/>
    <property type="match status" value="1"/>
</dbReference>
<dbReference type="PANTHER" id="PTHR47618:SF1">
    <property type="entry name" value="BIFUNCTIONAL OLIGORIBONUCLEASE AND PAP PHOSPHATASE NRNA"/>
    <property type="match status" value="1"/>
</dbReference>
<dbReference type="Pfam" id="PF01368">
    <property type="entry name" value="DHH"/>
    <property type="match status" value="1"/>
</dbReference>
<dbReference type="Pfam" id="PF02833">
    <property type="entry name" value="DHHA2"/>
    <property type="match status" value="1"/>
</dbReference>
<dbReference type="SMART" id="SM01131">
    <property type="entry name" value="DHHA2"/>
    <property type="match status" value="1"/>
</dbReference>
<dbReference type="SUPFAM" id="SSF64182">
    <property type="entry name" value="DHH phosphoesterases"/>
    <property type="match status" value="1"/>
</dbReference>
<reference key="1">
    <citation type="journal article" date="2010" name="Genome Biol.">
        <title>Structure and dynamics of the pan-genome of Streptococcus pneumoniae and closely related species.</title>
        <authorList>
            <person name="Donati C."/>
            <person name="Hiller N.L."/>
            <person name="Tettelin H."/>
            <person name="Muzzi A."/>
            <person name="Croucher N.J."/>
            <person name="Angiuoli S.V."/>
            <person name="Oggioni M."/>
            <person name="Dunning Hotopp J.C."/>
            <person name="Hu F.Z."/>
            <person name="Riley D.R."/>
            <person name="Covacci A."/>
            <person name="Mitchell T.J."/>
            <person name="Bentley S.D."/>
            <person name="Kilian M."/>
            <person name="Ehrlich G.D."/>
            <person name="Rappuoli R."/>
            <person name="Moxon E.R."/>
            <person name="Masignani V."/>
        </authorList>
    </citation>
    <scope>NUCLEOTIDE SEQUENCE [LARGE SCALE GENOMIC DNA]</scope>
    <source>
        <strain>Hungary19A-6</strain>
    </source>
</reference>
<accession>B1ICV4</accession>
<comment type="catalytic activity">
    <reaction evidence="1">
        <text>diphosphate + H2O = 2 phosphate + H(+)</text>
        <dbReference type="Rhea" id="RHEA:24576"/>
        <dbReference type="ChEBI" id="CHEBI:15377"/>
        <dbReference type="ChEBI" id="CHEBI:15378"/>
        <dbReference type="ChEBI" id="CHEBI:33019"/>
        <dbReference type="ChEBI" id="CHEBI:43474"/>
        <dbReference type="EC" id="3.6.1.1"/>
    </reaction>
</comment>
<comment type="cofactor">
    <cofactor evidence="1">
        <name>Mn(2+)</name>
        <dbReference type="ChEBI" id="CHEBI:29035"/>
    </cofactor>
    <text evidence="1">Binds 2 manganese ions per subunit.</text>
</comment>
<comment type="subcellular location">
    <subcellularLocation>
        <location evidence="1">Cytoplasm</location>
    </subcellularLocation>
</comment>
<comment type="similarity">
    <text evidence="1">Belongs to the PPase class C family.</text>
</comment>
<name>PPAC_STRPI</name>
<gene>
    <name evidence="1" type="primary">ppaC</name>
    <name type="ordered locus">SPH_1648</name>
</gene>
<sequence length="311" mass="33479">MSKILVFGHQNPDSDAIGSSVAFAYLAKEAYGLDTEAVALGTPNEETAFVLNYFGVEAPRVITSAKAEGAEQVILTDHNEFQQSVSDIAEVEVYGVVDHHRVANFETASPLYMRLEPVGSASSIVYRMFKEHGVAVPKEIAGLMLSGLISDTLLLKSPTTHPTDKIIAPELAELAGVNLEEYGLAMLKAGTNLASKSAEELIDIDAKTFELNGNNVRVAQVNTVDIAEVLERQAEIEAAMQAANESNGYSDFVLMITDIVNSNSEILALGANMDKVEAAFNFKLENNHAFLAGAVSRKKQVVPQLTESFNA</sequence>
<proteinExistence type="inferred from homology"/>
<feature type="chain" id="PRO_1000099653" description="Probable manganese-dependent inorganic pyrophosphatase">
    <location>
        <begin position="1"/>
        <end position="311"/>
    </location>
</feature>
<feature type="binding site" evidence="1">
    <location>
        <position position="9"/>
    </location>
    <ligand>
        <name>Mn(2+)</name>
        <dbReference type="ChEBI" id="CHEBI:29035"/>
        <label>1</label>
    </ligand>
</feature>
<feature type="binding site" evidence="1">
    <location>
        <position position="13"/>
    </location>
    <ligand>
        <name>Mn(2+)</name>
        <dbReference type="ChEBI" id="CHEBI:29035"/>
        <label>1</label>
    </ligand>
</feature>
<feature type="binding site" evidence="1">
    <location>
        <position position="15"/>
    </location>
    <ligand>
        <name>Mn(2+)</name>
        <dbReference type="ChEBI" id="CHEBI:29035"/>
        <label>2</label>
    </ligand>
</feature>
<feature type="binding site" evidence="1">
    <location>
        <position position="77"/>
    </location>
    <ligand>
        <name>Mn(2+)</name>
        <dbReference type="ChEBI" id="CHEBI:29035"/>
        <label>1</label>
    </ligand>
</feature>
<feature type="binding site" evidence="1">
    <location>
        <position position="77"/>
    </location>
    <ligand>
        <name>Mn(2+)</name>
        <dbReference type="ChEBI" id="CHEBI:29035"/>
        <label>2</label>
    </ligand>
</feature>
<feature type="binding site" evidence="1">
    <location>
        <position position="99"/>
    </location>
    <ligand>
        <name>Mn(2+)</name>
        <dbReference type="ChEBI" id="CHEBI:29035"/>
        <label>2</label>
    </ligand>
</feature>
<feature type="binding site" evidence="1">
    <location>
        <position position="151"/>
    </location>
    <ligand>
        <name>Mn(2+)</name>
        <dbReference type="ChEBI" id="CHEBI:29035"/>
        <label>2</label>
    </ligand>
</feature>
<organism>
    <name type="scientific">Streptococcus pneumoniae (strain Hungary19A-6)</name>
    <dbReference type="NCBI Taxonomy" id="487214"/>
    <lineage>
        <taxon>Bacteria</taxon>
        <taxon>Bacillati</taxon>
        <taxon>Bacillota</taxon>
        <taxon>Bacilli</taxon>
        <taxon>Lactobacillales</taxon>
        <taxon>Streptococcaceae</taxon>
        <taxon>Streptococcus</taxon>
    </lineage>
</organism>